<sequence length="337" mass="37069">MPKINRPRRGSLAFSPRKRAQSPIPKYKSWPEHSGAPALLGFAGYKVGMTHVLMVDDHKDSPTEGKEIMVPVTIIEIPTMKVAALRVYTKDTYGKHALTEIWAEPLDSQLSRRVTSPKNYDSTAAKKKYSDALAAGLVAEIYALAYTQPATMSGVPKKVPDLMEIKVAGGDIAKQYEYAFGLLGKEIRLSNVIETGAYADITAITIGKGTQGPVKRWGVTLRKRKHSVGGKERHVGTLGPWNPHHVRWEVPQSGQMGYQQRTEFNKRILKIGENGAEITPAGGFLNYGVIRNAYVVIKGSIPGPAKRLIRIRPAIRQGEHVVRSPAIQFVSVQSKQG</sequence>
<protein>
    <recommendedName>
        <fullName evidence="1">Large ribosomal subunit protein uL3</fullName>
    </recommendedName>
    <alternativeName>
        <fullName evidence="3">50S ribosomal protein L3</fullName>
    </alternativeName>
</protein>
<comment type="function">
    <text evidence="1">One of the primary rRNA binding proteins, it binds directly near the 3'-end of the 23S rRNA, where it nucleates assembly of the 50S subunit.</text>
</comment>
<comment type="subunit">
    <text evidence="1">Part of the 50S ribosomal subunit. Forms a cluster with proteins L14 and L24e.</text>
</comment>
<comment type="similarity">
    <text evidence="1">Belongs to the universal ribosomal protein uL3 family.</text>
</comment>
<keyword id="KW-1185">Reference proteome</keyword>
<keyword id="KW-0687">Ribonucleoprotein</keyword>
<keyword id="KW-0689">Ribosomal protein</keyword>
<keyword id="KW-0694">RNA-binding</keyword>
<keyword id="KW-0699">rRNA-binding</keyword>
<name>RL3_METB6</name>
<dbReference type="EMBL" id="CP000780">
    <property type="protein sequence ID" value="ABS55050.1"/>
    <property type="molecule type" value="Genomic_DNA"/>
</dbReference>
<dbReference type="RefSeq" id="WP_012106071.1">
    <property type="nucleotide sequence ID" value="NC_009712.1"/>
</dbReference>
<dbReference type="SMR" id="A7I5N9"/>
<dbReference type="STRING" id="456442.Mboo_0532"/>
<dbReference type="GeneID" id="5411759"/>
<dbReference type="KEGG" id="mbn:Mboo_0532"/>
<dbReference type="eggNOG" id="arCOG04070">
    <property type="taxonomic scope" value="Archaea"/>
</dbReference>
<dbReference type="HOGENOM" id="CLU_033361_2_0_2"/>
<dbReference type="OrthoDB" id="6121at2157"/>
<dbReference type="Proteomes" id="UP000002408">
    <property type="component" value="Chromosome"/>
</dbReference>
<dbReference type="GO" id="GO:0022625">
    <property type="term" value="C:cytosolic large ribosomal subunit"/>
    <property type="evidence" value="ECO:0007669"/>
    <property type="project" value="TreeGrafter"/>
</dbReference>
<dbReference type="GO" id="GO:0019843">
    <property type="term" value="F:rRNA binding"/>
    <property type="evidence" value="ECO:0007669"/>
    <property type="project" value="UniProtKB-UniRule"/>
</dbReference>
<dbReference type="GO" id="GO:0003735">
    <property type="term" value="F:structural constituent of ribosome"/>
    <property type="evidence" value="ECO:0007669"/>
    <property type="project" value="InterPro"/>
</dbReference>
<dbReference type="GO" id="GO:0006412">
    <property type="term" value="P:translation"/>
    <property type="evidence" value="ECO:0007669"/>
    <property type="project" value="UniProtKB-UniRule"/>
</dbReference>
<dbReference type="Gene3D" id="3.30.1430.10">
    <property type="match status" value="1"/>
</dbReference>
<dbReference type="Gene3D" id="4.10.960.10">
    <property type="entry name" value="Ribosomal protein L3, domain 3"/>
    <property type="match status" value="1"/>
</dbReference>
<dbReference type="Gene3D" id="2.40.30.10">
    <property type="entry name" value="Translation factors"/>
    <property type="match status" value="1"/>
</dbReference>
<dbReference type="HAMAP" id="MF_01325_A">
    <property type="entry name" value="Ribosomal_uL3_A"/>
    <property type="match status" value="1"/>
</dbReference>
<dbReference type="InterPro" id="IPR045077">
    <property type="entry name" value="L3_arc_euk"/>
</dbReference>
<dbReference type="InterPro" id="IPR044892">
    <property type="entry name" value="Ribosomal_L3_dom_3_arc_sf"/>
</dbReference>
<dbReference type="InterPro" id="IPR000597">
    <property type="entry name" value="Ribosomal_uL3"/>
</dbReference>
<dbReference type="InterPro" id="IPR019928">
    <property type="entry name" value="Ribosomal_uL3_arc"/>
</dbReference>
<dbReference type="InterPro" id="IPR009000">
    <property type="entry name" value="Transl_B-barrel_sf"/>
</dbReference>
<dbReference type="NCBIfam" id="TIGR03626">
    <property type="entry name" value="L3_arch"/>
    <property type="match status" value="1"/>
</dbReference>
<dbReference type="NCBIfam" id="NF003261">
    <property type="entry name" value="PRK04231.1"/>
    <property type="match status" value="1"/>
</dbReference>
<dbReference type="PANTHER" id="PTHR11363">
    <property type="entry name" value="60S RIBOSOMAL PROTEIN L3-RELATED"/>
    <property type="match status" value="1"/>
</dbReference>
<dbReference type="PANTHER" id="PTHR11363:SF5">
    <property type="entry name" value="LARGE RIBOSOMAL SUBUNIT PROTEIN UL3"/>
    <property type="match status" value="1"/>
</dbReference>
<dbReference type="Pfam" id="PF00297">
    <property type="entry name" value="Ribosomal_L3"/>
    <property type="match status" value="1"/>
</dbReference>
<dbReference type="SUPFAM" id="SSF50447">
    <property type="entry name" value="Translation proteins"/>
    <property type="match status" value="1"/>
</dbReference>
<proteinExistence type="inferred from homology"/>
<feature type="chain" id="PRO_1000052077" description="Large ribosomal subunit protein uL3">
    <location>
        <begin position="1"/>
        <end position="337"/>
    </location>
</feature>
<feature type="region of interest" description="Disordered" evidence="2">
    <location>
        <begin position="1"/>
        <end position="29"/>
    </location>
</feature>
<organism>
    <name type="scientific">Methanoregula boonei (strain DSM 21154 / JCM 14090 / 6A8)</name>
    <dbReference type="NCBI Taxonomy" id="456442"/>
    <lineage>
        <taxon>Archaea</taxon>
        <taxon>Methanobacteriati</taxon>
        <taxon>Methanobacteriota</taxon>
        <taxon>Stenosarchaea group</taxon>
        <taxon>Methanomicrobia</taxon>
        <taxon>Methanomicrobiales</taxon>
        <taxon>Methanoregulaceae</taxon>
        <taxon>Methanoregula</taxon>
    </lineage>
</organism>
<evidence type="ECO:0000255" key="1">
    <source>
        <dbReference type="HAMAP-Rule" id="MF_01325"/>
    </source>
</evidence>
<evidence type="ECO:0000256" key="2">
    <source>
        <dbReference type="SAM" id="MobiDB-lite"/>
    </source>
</evidence>
<evidence type="ECO:0000305" key="3"/>
<accession>A7I5N9</accession>
<gene>
    <name evidence="1" type="primary">rpl3</name>
    <name type="ordered locus">Mboo_0532</name>
</gene>
<reference key="1">
    <citation type="journal article" date="2015" name="Microbiology">
        <title>Genome of Methanoregula boonei 6A8 reveals adaptations to oligotrophic peatland environments.</title>
        <authorList>
            <person name="Braeuer S."/>
            <person name="Cadillo-Quiroz H."/>
            <person name="Kyrpides N."/>
            <person name="Woyke T."/>
            <person name="Goodwin L."/>
            <person name="Detter C."/>
            <person name="Podell S."/>
            <person name="Yavitt J.B."/>
            <person name="Zinder S.H."/>
        </authorList>
    </citation>
    <scope>NUCLEOTIDE SEQUENCE [LARGE SCALE GENOMIC DNA]</scope>
    <source>
        <strain>DSM 21154 / JCM 14090 / 6A8</strain>
    </source>
</reference>